<feature type="chain" id="PRO_0000358885" description="Probable serine/threonine-protein kinase glkA">
    <location>
        <begin position="1"/>
        <end position="473"/>
    </location>
</feature>
<feature type="domain" description="Protein kinase" evidence="1">
    <location>
        <begin position="91"/>
        <end position="366"/>
    </location>
</feature>
<feature type="region of interest" description="Disordered" evidence="3">
    <location>
        <begin position="1"/>
        <end position="84"/>
    </location>
</feature>
<feature type="region of interest" description="Disordered" evidence="3">
    <location>
        <begin position="389"/>
        <end position="418"/>
    </location>
</feature>
<feature type="region of interest" description="Disordered" evidence="3">
    <location>
        <begin position="437"/>
        <end position="473"/>
    </location>
</feature>
<feature type="compositionally biased region" description="Low complexity" evidence="3">
    <location>
        <begin position="7"/>
        <end position="84"/>
    </location>
</feature>
<feature type="compositionally biased region" description="Low complexity" evidence="3">
    <location>
        <begin position="442"/>
        <end position="466"/>
    </location>
</feature>
<feature type="active site" description="Proton acceptor" evidence="1 2">
    <location>
        <position position="208"/>
    </location>
</feature>
<feature type="binding site" evidence="1">
    <location>
        <begin position="97"/>
        <end position="105"/>
    </location>
    <ligand>
        <name>ATP</name>
        <dbReference type="ChEBI" id="CHEBI:30616"/>
    </ligand>
</feature>
<feature type="binding site" evidence="1">
    <location>
        <position position="119"/>
    </location>
    <ligand>
        <name>ATP</name>
        <dbReference type="ChEBI" id="CHEBI:30616"/>
    </ligand>
</feature>
<protein>
    <recommendedName>
        <fullName>Probable serine/threonine-protein kinase glkA</fullName>
        <ecNumber>2.7.11.26</ecNumber>
    </recommendedName>
    <alternativeName>
        <fullName>Glycogen synthase kinase-like kinase A</fullName>
    </alternativeName>
</protein>
<keyword id="KW-0067">ATP-binding</keyword>
<keyword id="KW-0418">Kinase</keyword>
<keyword id="KW-0547">Nucleotide-binding</keyword>
<keyword id="KW-1185">Reference proteome</keyword>
<keyword id="KW-0723">Serine/threonine-protein kinase</keyword>
<keyword id="KW-0808">Transferase</keyword>
<evidence type="ECO:0000255" key="1">
    <source>
        <dbReference type="PROSITE-ProRule" id="PRU00159"/>
    </source>
</evidence>
<evidence type="ECO:0000255" key="2">
    <source>
        <dbReference type="PROSITE-ProRule" id="PRU10028"/>
    </source>
</evidence>
<evidence type="ECO:0000256" key="3">
    <source>
        <dbReference type="SAM" id="MobiDB-lite"/>
    </source>
</evidence>
<evidence type="ECO:0000305" key="4"/>
<comment type="catalytic activity">
    <reaction>
        <text>L-seryl-[tau protein] + ATP = O-phospho-L-seryl-[tau protein] + ADP + H(+)</text>
        <dbReference type="Rhea" id="RHEA:12801"/>
        <dbReference type="Rhea" id="RHEA-COMP:13701"/>
        <dbReference type="Rhea" id="RHEA-COMP:13702"/>
        <dbReference type="ChEBI" id="CHEBI:15378"/>
        <dbReference type="ChEBI" id="CHEBI:29999"/>
        <dbReference type="ChEBI" id="CHEBI:30616"/>
        <dbReference type="ChEBI" id="CHEBI:83421"/>
        <dbReference type="ChEBI" id="CHEBI:456216"/>
        <dbReference type="EC" id="2.7.11.26"/>
    </reaction>
</comment>
<comment type="catalytic activity">
    <reaction>
        <text>L-threonyl-[tau protein] + ATP = O-phospho-L-threonyl-[tau protein] + ADP + H(+)</text>
        <dbReference type="Rhea" id="RHEA:53904"/>
        <dbReference type="Rhea" id="RHEA-COMP:13703"/>
        <dbReference type="Rhea" id="RHEA-COMP:13704"/>
        <dbReference type="ChEBI" id="CHEBI:15378"/>
        <dbReference type="ChEBI" id="CHEBI:30013"/>
        <dbReference type="ChEBI" id="CHEBI:30616"/>
        <dbReference type="ChEBI" id="CHEBI:61977"/>
        <dbReference type="ChEBI" id="CHEBI:456216"/>
        <dbReference type="EC" id="2.7.11.26"/>
    </reaction>
</comment>
<comment type="similarity">
    <text evidence="4">Belongs to the protein kinase superfamily. CMGC Ser/Thr protein kinase family. GSK-3 subfamily.</text>
</comment>
<accession>Q55C57</accession>
<gene>
    <name type="primary">glkA</name>
    <name type="ORF">DDB_G0270218</name>
</gene>
<proteinExistence type="inferred from homology"/>
<sequence length="473" mass="52554">MTIPTDNNSSNNKGYNDNNNNNNNNNNNNNNNNNNNNNNNKEHPNINNNNNNNNNNNNNNIKESSSSNSNHSSSQSSSTATVNSNPKVYPYEIIKQVGQGTFGKVYEAKNQDNKRVAIKKVEKSNHFISREYDILKIVAHPNCLRILDMFYTAEDNKKMQNLVFDFIPYTLASLLKKRQLSINFIKVLFYQLCQAIKHIHSKAICHRDITPNNILLSSKGELTLADFGSAKILESNHTSMSYICSRYYRAPELLVGCSNYTTKIDIWSIGCILAEMLIGKPLFPGTNSNDQLGRIIEVLGSPTKDDMEAMKPSKPYHLQLPNINPKFFESLHNVEDKTVVDLLSKIFIFDPVKRASIDEIIAHPFLRDVNINSLELFDEMKCFSVSGNGKSSLTTNSTSSSSTTANMTSLASSSSNNKTTCSETYLSRLPTSAITSSSNLKSIDNSNNGKSSSSSNNIPSLNNSNNGVITNTI</sequence>
<organism>
    <name type="scientific">Dictyostelium discoideum</name>
    <name type="common">Social amoeba</name>
    <dbReference type="NCBI Taxonomy" id="44689"/>
    <lineage>
        <taxon>Eukaryota</taxon>
        <taxon>Amoebozoa</taxon>
        <taxon>Evosea</taxon>
        <taxon>Eumycetozoa</taxon>
        <taxon>Dictyostelia</taxon>
        <taxon>Dictyosteliales</taxon>
        <taxon>Dictyosteliaceae</taxon>
        <taxon>Dictyostelium</taxon>
    </lineage>
</organism>
<reference key="1">
    <citation type="journal article" date="2005" name="Nature">
        <title>The genome of the social amoeba Dictyostelium discoideum.</title>
        <authorList>
            <person name="Eichinger L."/>
            <person name="Pachebat J.A."/>
            <person name="Gloeckner G."/>
            <person name="Rajandream M.A."/>
            <person name="Sucgang R."/>
            <person name="Berriman M."/>
            <person name="Song J."/>
            <person name="Olsen R."/>
            <person name="Szafranski K."/>
            <person name="Xu Q."/>
            <person name="Tunggal B."/>
            <person name="Kummerfeld S."/>
            <person name="Madera M."/>
            <person name="Konfortov B.A."/>
            <person name="Rivero F."/>
            <person name="Bankier A.T."/>
            <person name="Lehmann R."/>
            <person name="Hamlin N."/>
            <person name="Davies R."/>
            <person name="Gaudet P."/>
            <person name="Fey P."/>
            <person name="Pilcher K."/>
            <person name="Chen G."/>
            <person name="Saunders D."/>
            <person name="Sodergren E.J."/>
            <person name="Davis P."/>
            <person name="Kerhornou A."/>
            <person name="Nie X."/>
            <person name="Hall N."/>
            <person name="Anjard C."/>
            <person name="Hemphill L."/>
            <person name="Bason N."/>
            <person name="Farbrother P."/>
            <person name="Desany B."/>
            <person name="Just E."/>
            <person name="Morio T."/>
            <person name="Rost R."/>
            <person name="Churcher C.M."/>
            <person name="Cooper J."/>
            <person name="Haydock S."/>
            <person name="van Driessche N."/>
            <person name="Cronin A."/>
            <person name="Goodhead I."/>
            <person name="Muzny D.M."/>
            <person name="Mourier T."/>
            <person name="Pain A."/>
            <person name="Lu M."/>
            <person name="Harper D."/>
            <person name="Lindsay R."/>
            <person name="Hauser H."/>
            <person name="James K.D."/>
            <person name="Quiles M."/>
            <person name="Madan Babu M."/>
            <person name="Saito T."/>
            <person name="Buchrieser C."/>
            <person name="Wardroper A."/>
            <person name="Felder M."/>
            <person name="Thangavelu M."/>
            <person name="Johnson D."/>
            <person name="Knights A."/>
            <person name="Loulseged H."/>
            <person name="Mungall K.L."/>
            <person name="Oliver K."/>
            <person name="Price C."/>
            <person name="Quail M.A."/>
            <person name="Urushihara H."/>
            <person name="Hernandez J."/>
            <person name="Rabbinowitsch E."/>
            <person name="Steffen D."/>
            <person name="Sanders M."/>
            <person name="Ma J."/>
            <person name="Kohara Y."/>
            <person name="Sharp S."/>
            <person name="Simmonds M.N."/>
            <person name="Spiegler S."/>
            <person name="Tivey A."/>
            <person name="Sugano S."/>
            <person name="White B."/>
            <person name="Walker D."/>
            <person name="Woodward J.R."/>
            <person name="Winckler T."/>
            <person name="Tanaka Y."/>
            <person name="Shaulsky G."/>
            <person name="Schleicher M."/>
            <person name="Weinstock G.M."/>
            <person name="Rosenthal A."/>
            <person name="Cox E.C."/>
            <person name="Chisholm R.L."/>
            <person name="Gibbs R.A."/>
            <person name="Loomis W.F."/>
            <person name="Platzer M."/>
            <person name="Kay R.R."/>
            <person name="Williams J.G."/>
            <person name="Dear P.H."/>
            <person name="Noegel A.A."/>
            <person name="Barrell B.G."/>
            <person name="Kuspa A."/>
        </authorList>
    </citation>
    <scope>NUCLEOTIDE SEQUENCE [LARGE SCALE GENOMIC DNA]</scope>
    <source>
        <strain>AX4</strain>
    </source>
</reference>
<name>GLKA_DICDI</name>
<dbReference type="EC" id="2.7.11.26"/>
<dbReference type="EMBL" id="AAFI02000005">
    <property type="protein sequence ID" value="EAL72459.1"/>
    <property type="molecule type" value="Genomic_DNA"/>
</dbReference>
<dbReference type="RefSeq" id="XP_646624.1">
    <property type="nucleotide sequence ID" value="XM_641532.1"/>
</dbReference>
<dbReference type="SMR" id="Q55C57"/>
<dbReference type="FunCoup" id="Q55C57">
    <property type="interactions" value="10"/>
</dbReference>
<dbReference type="STRING" id="44689.Q55C57"/>
<dbReference type="PaxDb" id="44689-DDB0216280"/>
<dbReference type="EnsemblProtists" id="EAL72459">
    <property type="protein sequence ID" value="EAL72459"/>
    <property type="gene ID" value="DDB_G0270218"/>
</dbReference>
<dbReference type="GeneID" id="8617596"/>
<dbReference type="KEGG" id="ddi:DDB_G0270218"/>
<dbReference type="dictyBase" id="DDB_G0270218">
    <property type="gene designation" value="glkA"/>
</dbReference>
<dbReference type="VEuPathDB" id="AmoebaDB:DDB_G0270218"/>
<dbReference type="eggNOG" id="KOG0658">
    <property type="taxonomic scope" value="Eukaryota"/>
</dbReference>
<dbReference type="HOGENOM" id="CLU_000288_181_20_1"/>
<dbReference type="InParanoid" id="Q55C57"/>
<dbReference type="OMA" id="HSKAICH"/>
<dbReference type="PhylomeDB" id="Q55C57"/>
<dbReference type="PRO" id="PR:Q55C57"/>
<dbReference type="Proteomes" id="UP000002195">
    <property type="component" value="Chromosome 1"/>
</dbReference>
<dbReference type="GO" id="GO:0031252">
    <property type="term" value="C:cell leading edge"/>
    <property type="evidence" value="ECO:0000314"/>
    <property type="project" value="dictyBase"/>
</dbReference>
<dbReference type="GO" id="GO:0005737">
    <property type="term" value="C:cytoplasm"/>
    <property type="evidence" value="ECO:0000318"/>
    <property type="project" value="GO_Central"/>
</dbReference>
<dbReference type="GO" id="GO:0005634">
    <property type="term" value="C:nucleus"/>
    <property type="evidence" value="ECO:0000318"/>
    <property type="project" value="GO_Central"/>
</dbReference>
<dbReference type="GO" id="GO:0005524">
    <property type="term" value="F:ATP binding"/>
    <property type="evidence" value="ECO:0000305"/>
    <property type="project" value="dictyBase"/>
</dbReference>
<dbReference type="GO" id="GO:0004672">
    <property type="term" value="F:protein kinase activity"/>
    <property type="evidence" value="ECO:0000314"/>
    <property type="project" value="dictyBase"/>
</dbReference>
<dbReference type="GO" id="GO:0004674">
    <property type="term" value="F:protein serine/threonine kinase activity"/>
    <property type="evidence" value="ECO:0000318"/>
    <property type="project" value="GO_Central"/>
</dbReference>
<dbReference type="GO" id="GO:0005977">
    <property type="term" value="P:glycogen metabolic process"/>
    <property type="evidence" value="ECO:0000250"/>
    <property type="project" value="dictyBase"/>
</dbReference>
<dbReference type="GO" id="GO:0035556">
    <property type="term" value="P:intracellular signal transduction"/>
    <property type="evidence" value="ECO:0000318"/>
    <property type="project" value="GO_Central"/>
</dbReference>
<dbReference type="GO" id="GO:0010629">
    <property type="term" value="P:negative regulation of gene expression"/>
    <property type="evidence" value="ECO:0007005"/>
    <property type="project" value="dictyBase"/>
</dbReference>
<dbReference type="GO" id="GO:0010628">
    <property type="term" value="P:positive regulation of gene expression"/>
    <property type="evidence" value="ECO:0007005"/>
    <property type="project" value="dictyBase"/>
</dbReference>
<dbReference type="GO" id="GO:1905511">
    <property type="term" value="P:positive regulation of myosin II filament assembly"/>
    <property type="evidence" value="ECO:0000315"/>
    <property type="project" value="dictyBase"/>
</dbReference>
<dbReference type="GO" id="GO:0051897">
    <property type="term" value="P:positive regulation of phosphatidylinositol 3-kinase/protein kinase B signal transduction"/>
    <property type="evidence" value="ECO:0000315"/>
    <property type="project" value="dictyBase"/>
</dbReference>
<dbReference type="GO" id="GO:0043520">
    <property type="term" value="P:regulation of myosin II filament assembly"/>
    <property type="evidence" value="ECO:0000315"/>
    <property type="project" value="dictyBase"/>
</dbReference>
<dbReference type="GO" id="GO:0007264">
    <property type="term" value="P:small GTPase-mediated signal transduction"/>
    <property type="evidence" value="ECO:0000315"/>
    <property type="project" value="dictyBase"/>
</dbReference>
<dbReference type="CDD" id="cd14137">
    <property type="entry name" value="STKc_GSK3"/>
    <property type="match status" value="1"/>
</dbReference>
<dbReference type="FunFam" id="3.30.200.20:FF:001060">
    <property type="entry name" value="CMGC family protein kinase"/>
    <property type="match status" value="1"/>
</dbReference>
<dbReference type="FunFam" id="1.10.510.10:FF:002242">
    <property type="entry name" value="Probable serine/threonine-protein kinase glkA"/>
    <property type="match status" value="1"/>
</dbReference>
<dbReference type="Gene3D" id="3.30.200.20">
    <property type="entry name" value="Phosphorylase Kinase, domain 1"/>
    <property type="match status" value="1"/>
</dbReference>
<dbReference type="Gene3D" id="1.10.510.10">
    <property type="entry name" value="Transferase(Phosphotransferase) domain 1"/>
    <property type="match status" value="1"/>
</dbReference>
<dbReference type="InterPro" id="IPR050591">
    <property type="entry name" value="GSK-3"/>
</dbReference>
<dbReference type="InterPro" id="IPR011009">
    <property type="entry name" value="Kinase-like_dom_sf"/>
</dbReference>
<dbReference type="InterPro" id="IPR000719">
    <property type="entry name" value="Prot_kinase_dom"/>
</dbReference>
<dbReference type="InterPro" id="IPR017441">
    <property type="entry name" value="Protein_kinase_ATP_BS"/>
</dbReference>
<dbReference type="InterPro" id="IPR039192">
    <property type="entry name" value="STKc_GSK3"/>
</dbReference>
<dbReference type="InterPro" id="IPR008266">
    <property type="entry name" value="Tyr_kinase_AS"/>
</dbReference>
<dbReference type="PANTHER" id="PTHR24057">
    <property type="entry name" value="GLYCOGEN SYNTHASE KINASE-3 ALPHA"/>
    <property type="match status" value="1"/>
</dbReference>
<dbReference type="PANTHER" id="PTHR24057:SF0">
    <property type="entry name" value="PROTEIN KINASE SHAGGY-RELATED"/>
    <property type="match status" value="1"/>
</dbReference>
<dbReference type="Pfam" id="PF00069">
    <property type="entry name" value="Pkinase"/>
    <property type="match status" value="1"/>
</dbReference>
<dbReference type="SUPFAM" id="SSF56112">
    <property type="entry name" value="Protein kinase-like (PK-like)"/>
    <property type="match status" value="1"/>
</dbReference>
<dbReference type="PROSITE" id="PS00107">
    <property type="entry name" value="PROTEIN_KINASE_ATP"/>
    <property type="match status" value="1"/>
</dbReference>
<dbReference type="PROSITE" id="PS50011">
    <property type="entry name" value="PROTEIN_KINASE_DOM"/>
    <property type="match status" value="1"/>
</dbReference>
<dbReference type="PROSITE" id="PS00109">
    <property type="entry name" value="PROTEIN_KINASE_TYR"/>
    <property type="match status" value="1"/>
</dbReference>